<dbReference type="EMBL" id="DP000197">
    <property type="protein sequence ID" value="ABJ08891.1"/>
    <property type="molecule type" value="Genomic_DNA"/>
</dbReference>
<dbReference type="SMR" id="Q07DV1"/>
<dbReference type="STRING" id="37293.ENSANAP00000036080"/>
<dbReference type="Proteomes" id="UP000233020">
    <property type="component" value="Whole Genome Shotgun Assembly"/>
</dbReference>
<dbReference type="GO" id="GO:0015629">
    <property type="term" value="C:actin cytoskeleton"/>
    <property type="evidence" value="ECO:0007669"/>
    <property type="project" value="TreeGrafter"/>
</dbReference>
<dbReference type="GO" id="GO:0005938">
    <property type="term" value="C:cell cortex"/>
    <property type="evidence" value="ECO:0007669"/>
    <property type="project" value="UniProtKB-SubCell"/>
</dbReference>
<dbReference type="GO" id="GO:0043197">
    <property type="term" value="C:dendritic spine"/>
    <property type="evidence" value="ECO:0000250"/>
    <property type="project" value="UniProtKB"/>
</dbReference>
<dbReference type="GO" id="GO:0090443">
    <property type="term" value="C:FAR/SIN/STRIPAK complex"/>
    <property type="evidence" value="ECO:0000250"/>
    <property type="project" value="UniProtKB"/>
</dbReference>
<dbReference type="GO" id="GO:0051721">
    <property type="term" value="F:protein phosphatase 2A binding"/>
    <property type="evidence" value="ECO:0007669"/>
    <property type="project" value="TreeGrafter"/>
</dbReference>
<dbReference type="Gene3D" id="1.25.40.20">
    <property type="entry name" value="Ankyrin repeat-containing domain"/>
    <property type="match status" value="1"/>
</dbReference>
<dbReference type="InterPro" id="IPR002110">
    <property type="entry name" value="Ankyrin_rpt"/>
</dbReference>
<dbReference type="InterPro" id="IPR036770">
    <property type="entry name" value="Ankyrin_rpt-contain_sf"/>
</dbReference>
<dbReference type="InterPro" id="IPR050719">
    <property type="entry name" value="Cortactin-Actin_Reg"/>
</dbReference>
<dbReference type="InterPro" id="IPR019131">
    <property type="entry name" value="Cortactin-binding_p2_N"/>
</dbReference>
<dbReference type="PANTHER" id="PTHR23166:SF9">
    <property type="entry name" value="CTTNBP2 N-TERMINAL-LIKE PROTEIN"/>
    <property type="match status" value="1"/>
</dbReference>
<dbReference type="PANTHER" id="PTHR23166">
    <property type="entry name" value="FILAMIN/GPBP-INTERACTING PROTEIN"/>
    <property type="match status" value="1"/>
</dbReference>
<dbReference type="Pfam" id="PF25408">
    <property type="entry name" value="AAA_lid_NAV1"/>
    <property type="match status" value="1"/>
</dbReference>
<dbReference type="Pfam" id="PF12796">
    <property type="entry name" value="Ank_2"/>
    <property type="match status" value="2"/>
</dbReference>
<dbReference type="Pfam" id="PF09727">
    <property type="entry name" value="CortBP2"/>
    <property type="match status" value="1"/>
</dbReference>
<dbReference type="SMART" id="SM00248">
    <property type="entry name" value="ANK"/>
    <property type="match status" value="6"/>
</dbReference>
<dbReference type="SUPFAM" id="SSF48403">
    <property type="entry name" value="Ankyrin repeat"/>
    <property type="match status" value="1"/>
</dbReference>
<dbReference type="PROSITE" id="PS50297">
    <property type="entry name" value="ANK_REP_REGION"/>
    <property type="match status" value="1"/>
</dbReference>
<dbReference type="PROSITE" id="PS50088">
    <property type="entry name" value="ANK_REPEAT"/>
    <property type="match status" value="4"/>
</dbReference>
<feature type="chain" id="PRO_0000260400" description="Cortactin-binding protein 2">
    <location>
        <begin position="1"/>
        <end position="1649"/>
    </location>
</feature>
<feature type="repeat" description="ANK 1">
    <location>
        <begin position="709"/>
        <end position="739"/>
    </location>
</feature>
<feature type="repeat" description="ANK 2">
    <location>
        <begin position="743"/>
        <end position="772"/>
    </location>
</feature>
<feature type="repeat" description="ANK 3">
    <location>
        <begin position="776"/>
        <end position="805"/>
    </location>
</feature>
<feature type="repeat" description="ANK 4">
    <location>
        <begin position="809"/>
        <end position="838"/>
    </location>
</feature>
<feature type="repeat" description="ANK 5">
    <location>
        <begin position="842"/>
        <end position="871"/>
    </location>
</feature>
<feature type="repeat" description="ANK 6">
    <location>
        <begin position="912"/>
        <end position="942"/>
    </location>
</feature>
<feature type="region of interest" description="Disordered" evidence="5">
    <location>
        <begin position="1"/>
        <end position="23"/>
    </location>
</feature>
<feature type="region of interest" description="Disordered" evidence="5">
    <location>
        <begin position="366"/>
        <end position="440"/>
    </location>
</feature>
<feature type="region of interest" description="Disordered" evidence="5">
    <location>
        <begin position="454"/>
        <end position="478"/>
    </location>
</feature>
<feature type="region of interest" description="Disordered" evidence="5">
    <location>
        <begin position="499"/>
        <end position="616"/>
    </location>
</feature>
<feature type="region of interest" description="Disordered" evidence="5">
    <location>
        <begin position="872"/>
        <end position="897"/>
    </location>
</feature>
<feature type="region of interest" description="Disordered" evidence="5">
    <location>
        <begin position="1444"/>
        <end position="1482"/>
    </location>
</feature>
<feature type="region of interest" description="Disordered" evidence="5">
    <location>
        <begin position="1616"/>
        <end position="1649"/>
    </location>
</feature>
<feature type="coiled-coil region" evidence="4">
    <location>
        <begin position="119"/>
        <end position="276"/>
    </location>
</feature>
<feature type="compositionally biased region" description="Low complexity" evidence="5">
    <location>
        <begin position="368"/>
        <end position="379"/>
    </location>
</feature>
<feature type="compositionally biased region" description="Low complexity" evidence="5">
    <location>
        <begin position="386"/>
        <end position="396"/>
    </location>
</feature>
<feature type="compositionally biased region" description="Polar residues" evidence="5">
    <location>
        <begin position="411"/>
        <end position="422"/>
    </location>
</feature>
<feature type="compositionally biased region" description="Polar residues" evidence="5">
    <location>
        <begin position="583"/>
        <end position="593"/>
    </location>
</feature>
<feature type="compositionally biased region" description="Low complexity" evidence="5">
    <location>
        <begin position="1624"/>
        <end position="1638"/>
    </location>
</feature>
<feature type="compositionally biased region" description="Polar residues" evidence="5">
    <location>
        <begin position="1639"/>
        <end position="1649"/>
    </location>
</feature>
<feature type="modified residue" description="Asymmetric dimethylarginine" evidence="1">
    <location>
        <position position="498"/>
    </location>
</feature>
<feature type="modified residue" description="Phosphoserine" evidence="3">
    <location>
        <position position="1524"/>
    </location>
</feature>
<keyword id="KW-0040">ANK repeat</keyword>
<keyword id="KW-0966">Cell projection</keyword>
<keyword id="KW-0175">Coiled coil</keyword>
<keyword id="KW-0963">Cytoplasm</keyword>
<keyword id="KW-0488">Methylation</keyword>
<keyword id="KW-0597">Phosphoprotein</keyword>
<keyword id="KW-1185">Reference proteome</keyword>
<keyword id="KW-0677">Repeat</keyword>
<keyword id="KW-0770">Synapse</keyword>
<accession>Q07DV1</accession>
<comment type="function">
    <text evidence="2">Regulates the dendritic spine distribution of CTTN/cortactin in hippocampal neurons, and thus controls dendritic spinogenesis and dendritic spine maintenance. Associates with the striatin-interacting phosphatase and kinase (STRIPAK) core complex to regulate dendritic spine distribution of the STRIPAK complex in hippocampal neurons.</text>
</comment>
<comment type="subunit">
    <text evidence="2">Interacts with CTTN/cortactin SH3 domain. Interacts with STRN, STRN4/zinedin and MOB4/phocein; this interactions mediate the association with the STRIPAK core complex and may regulate dendritic spine distribution of the STRIPAK complex in hippocampal neurons. Activation of glutamate receptors weakens the interaction with STRN and STRN4.</text>
</comment>
<comment type="subcellular location">
    <subcellularLocation>
        <location evidence="1">Cytoplasm</location>
        <location evidence="1">Cell cortex</location>
    </subcellularLocation>
    <subcellularLocation>
        <location evidence="2">Cell projection</location>
        <location evidence="2">Dendritic spine</location>
    </subcellularLocation>
    <text evidence="2">Remains associated with dendritic spines even after glutamate stimulation.</text>
</comment>
<organism>
    <name type="scientific">Aotus nancymaae</name>
    <name type="common">Ma's night monkey</name>
    <dbReference type="NCBI Taxonomy" id="37293"/>
    <lineage>
        <taxon>Eukaryota</taxon>
        <taxon>Metazoa</taxon>
        <taxon>Chordata</taxon>
        <taxon>Craniata</taxon>
        <taxon>Vertebrata</taxon>
        <taxon>Euteleostomi</taxon>
        <taxon>Mammalia</taxon>
        <taxon>Eutheria</taxon>
        <taxon>Euarchontoglires</taxon>
        <taxon>Primates</taxon>
        <taxon>Haplorrhini</taxon>
        <taxon>Platyrrhini</taxon>
        <taxon>Aotidae</taxon>
        <taxon>Aotus</taxon>
    </lineage>
</organism>
<evidence type="ECO:0000250" key="1">
    <source>
        <dbReference type="UniProtKB" id="B9EJA2"/>
    </source>
</evidence>
<evidence type="ECO:0000250" key="2">
    <source>
        <dbReference type="UniProtKB" id="Q2IBD4"/>
    </source>
</evidence>
<evidence type="ECO:0000250" key="3">
    <source>
        <dbReference type="UniProtKB" id="Q8WZ74"/>
    </source>
</evidence>
<evidence type="ECO:0000255" key="4"/>
<evidence type="ECO:0000256" key="5">
    <source>
        <dbReference type="SAM" id="MobiDB-lite"/>
    </source>
</evidence>
<name>CTTB2_AOTNA</name>
<protein>
    <recommendedName>
        <fullName>Cortactin-binding protein 2</fullName>
        <shortName>CortBP2</shortName>
    </recommendedName>
</protein>
<reference key="1">
    <citation type="submission" date="2006-09" db="EMBL/GenBank/DDBJ databases">
        <title>NISC comparative sequencing initiative.</title>
        <authorList>
            <person name="Antonellis A."/>
            <person name="Ayele K."/>
            <person name="Benjamin B."/>
            <person name="Blakesley R.W."/>
            <person name="Boakye A."/>
            <person name="Bouffard G.G."/>
            <person name="Brinkley C."/>
            <person name="Brooks S."/>
            <person name="Chu G."/>
            <person name="Coleman H."/>
            <person name="Engle J."/>
            <person name="Gestole M."/>
            <person name="Greene A."/>
            <person name="Guan X."/>
            <person name="Gupta J."/>
            <person name="Haghighi P."/>
            <person name="Han J."/>
            <person name="Hansen N."/>
            <person name="Ho S.-L."/>
            <person name="Hu P."/>
            <person name="Hunter G."/>
            <person name="Hurle B."/>
            <person name="Idol J.R."/>
            <person name="Kwong P."/>
            <person name="Laric P."/>
            <person name="Larson S."/>
            <person name="Lee-Lin S.-Q."/>
            <person name="Legaspi R."/>
            <person name="Madden M."/>
            <person name="Maduro Q.L."/>
            <person name="Maduro V.B."/>
            <person name="Margulies E.H."/>
            <person name="Masiello C."/>
            <person name="Maskeri B."/>
            <person name="McDowell J."/>
            <person name="Mojidi H.A."/>
            <person name="Mullikin J.C."/>
            <person name="Oestreicher J.S."/>
            <person name="Park M."/>
            <person name="Portnoy M.E."/>
            <person name="Prasad A."/>
            <person name="Puri O."/>
            <person name="Reddix-Dugue N."/>
            <person name="Schandler K."/>
            <person name="Schueler M.G."/>
            <person name="Sison C."/>
            <person name="Stantripop S."/>
            <person name="Stephen E."/>
            <person name="Taye A."/>
            <person name="Thomas J.W."/>
            <person name="Thomas P.J."/>
            <person name="Tsipouri V."/>
            <person name="Ung L."/>
            <person name="Vogt J.L."/>
            <person name="Wetherby K.D."/>
            <person name="Young A."/>
            <person name="Green E.D."/>
        </authorList>
    </citation>
    <scope>NUCLEOTIDE SEQUENCE [LARGE SCALE GENOMIC DNA]</scope>
</reference>
<sequence length="1649" mass="179243">MATDGASCEPDLSRAPEDAAGAAAEAAKKEFDVDTLSKSELRMLLSVMEGELEARDLVIEALRARRKEVFIQERYGRFNLNDPFLALQRDYEAGAGDKEKKPVCTNPLSILEAVMAHCRKMQERMSAQLAAAESRQKKLEMEKLQLQALEQEHKKLATRLEEERGKNKQVVLMLVKECKQLSGKVIEEAQKLEDVMAKLEEEKKKTNELEEELCAEKRRSTEMEAQMEKQLSEFDTEREQLRAKLNREEAHTTDLKEEIDKMKKMIEQLKRGSDSKPSLSLPRKTKDRRLVSISVGTEGTVTRSVACQTDLVTESADHVKKLPLTMPVKPSTGSPLASANAKGSVCTSAAMARPGIDRQASHGDLIGVSVPAFPPSSASRIEENGPSTGSTPDPTSSTPPLPSNAAPPTAQTPGITPQNSQAPPMHSLHSPCANASLHPGLNPRIQAARFRFQGNANDPDQNGNTTQSPPSRDVSPTSRDNLVAKQLARNTVTQALSRFTGPQAGAPPRPGAPPAGDVGTHPSVGRTSVKTHGVARVDRGNPPPIPPKKPGLSQTPSPPHPQLKVIIDSSRASNTGAKGDNKTVASPPSSLPQGNRVINEENLPKSSSPQLPPKPSIDLTVAPAGCAVSALATSQVGAWPAATPGLNQPACSDSSLVIPTTIAFCSSINPVSASSCRPGASDSLLVTASGWSPSLTPLLMSGGPAPLAGRPTLLQQAAAQGNVTLLSMLLNEEGLDINYSCEDGHSALYSAAKNGHTDCVRLLLSAEAQVNAADKNGFTPLCAAAAQGHFKCVELLIAYDANINHAADGGQTPLYLACKNGNKECIKLLLEAGTDRSVKTTDGWTPVHAAVDTGNVDSLKLLMYHRVPAHGNSFSEEESESGVFDLDGGEESPEGKSKPVVTADLINHANREGWTAAHIAASKGFKNCLEILCRHGGLETERRDKCNRTVHDVATDDCKHLLENLNALKIPLRISVGEIEPSNYGSDDFECENTICALNIRKQTSWDDFSKAVSQALTNHFQAISSDGWWSLEDVTCNNTTDSNIGLSARSIRSITLGNVPWSVGQSFAQSPWDFMMKNKAEHITVLLSGPQEGCLSSVTYASMIPLQMMQNYLRLVEQYHNVIFHGPEGSLQDYIVHQLALCLKHRQMAAGFSCEIVRAEVDAGFSKKQLLDLFISSACLIPVKQSPVKKKIIIILENLEKSSLSELLRDFLAPLENRSTESPCTFQKGNGMSECYYFHENCFLMGTIAKACLQGSDLLVQQHFRWVQLRWDAEPMQGLLQRFLRRKVVNKFRGQVPPPCDPVCKTVDWALSVWRQLNSCLARLGTPEALLGPKYFLSCPVVPGHAQVTVKWMSKLWNGVITPRVQEAILSRASVKRQPGFGQTTAKRHPSQGQQAVVKAALSILLNKAVLHGCPLPRAELEQHTADFKGGSFPLSIVSSYNSCSKKKGESGAWRRVNTSPRRKSSRFSLPTWNKPDLSNEGIKNKTLSQLNCNRNASLSKQKSLENDVSLTLNLDQRLSLGSDDEADLVKELQSMCSSKSESDISKIADSRDDLRMFDSSGNHPVFSATINNLRMPVSQKEVCPLSSHQTTECSNSKSKTELGVSRVKSFLPVPRSKVTQCSQNTKRSSSSSNTRQIEINNNSKEEN</sequence>
<gene>
    <name type="primary">CTTNBP2</name>
    <name type="synonym">CORTBP2</name>
</gene>
<proteinExistence type="inferred from homology"/>